<name>IHFB_CAUSK</name>
<organism>
    <name type="scientific">Caulobacter sp. (strain K31)</name>
    <dbReference type="NCBI Taxonomy" id="366602"/>
    <lineage>
        <taxon>Bacteria</taxon>
        <taxon>Pseudomonadati</taxon>
        <taxon>Pseudomonadota</taxon>
        <taxon>Alphaproteobacteria</taxon>
        <taxon>Caulobacterales</taxon>
        <taxon>Caulobacteraceae</taxon>
        <taxon>Caulobacter</taxon>
    </lineage>
</organism>
<sequence>MIKSELIARLANENPHLTQKDVERVVGVILERMIGALEDGGRVELRGFGALSVRSRPARAGRNPRTGETVDVRAKHVPFFKSGKELRGRLNADE</sequence>
<comment type="function">
    <text evidence="1">This protein is one of the two subunits of integration host factor, a specific DNA-binding protein that functions in genetic recombination as well as in transcriptional and translational control.</text>
</comment>
<comment type="subunit">
    <text evidence="1">Heterodimer of an alpha and a beta chain.</text>
</comment>
<comment type="similarity">
    <text evidence="1">Belongs to the bacterial histone-like protein family.</text>
</comment>
<evidence type="ECO:0000255" key="1">
    <source>
        <dbReference type="HAMAP-Rule" id="MF_00381"/>
    </source>
</evidence>
<gene>
    <name evidence="1" type="primary">ihfB</name>
    <name evidence="1" type="synonym">himD</name>
    <name type="ordered locus">Caul_0104</name>
</gene>
<dbReference type="EMBL" id="CP000927">
    <property type="protein sequence ID" value="ABZ69242.1"/>
    <property type="molecule type" value="Genomic_DNA"/>
</dbReference>
<dbReference type="SMR" id="B0T273"/>
<dbReference type="STRING" id="366602.Caul_0104"/>
<dbReference type="KEGG" id="cak:Caul_0104"/>
<dbReference type="eggNOG" id="COG0776">
    <property type="taxonomic scope" value="Bacteria"/>
</dbReference>
<dbReference type="HOGENOM" id="CLU_105066_2_0_5"/>
<dbReference type="OrthoDB" id="9804203at2"/>
<dbReference type="GO" id="GO:0005694">
    <property type="term" value="C:chromosome"/>
    <property type="evidence" value="ECO:0007669"/>
    <property type="project" value="InterPro"/>
</dbReference>
<dbReference type="GO" id="GO:0005829">
    <property type="term" value="C:cytosol"/>
    <property type="evidence" value="ECO:0007669"/>
    <property type="project" value="TreeGrafter"/>
</dbReference>
<dbReference type="GO" id="GO:0003677">
    <property type="term" value="F:DNA binding"/>
    <property type="evidence" value="ECO:0007669"/>
    <property type="project" value="UniProtKB-UniRule"/>
</dbReference>
<dbReference type="GO" id="GO:0030527">
    <property type="term" value="F:structural constituent of chromatin"/>
    <property type="evidence" value="ECO:0007669"/>
    <property type="project" value="InterPro"/>
</dbReference>
<dbReference type="GO" id="GO:0006310">
    <property type="term" value="P:DNA recombination"/>
    <property type="evidence" value="ECO:0007669"/>
    <property type="project" value="UniProtKB-UniRule"/>
</dbReference>
<dbReference type="GO" id="GO:0006355">
    <property type="term" value="P:regulation of DNA-templated transcription"/>
    <property type="evidence" value="ECO:0007669"/>
    <property type="project" value="UniProtKB-UniRule"/>
</dbReference>
<dbReference type="GO" id="GO:0006417">
    <property type="term" value="P:regulation of translation"/>
    <property type="evidence" value="ECO:0007669"/>
    <property type="project" value="UniProtKB-UniRule"/>
</dbReference>
<dbReference type="CDD" id="cd13836">
    <property type="entry name" value="IHF_B"/>
    <property type="match status" value="1"/>
</dbReference>
<dbReference type="Gene3D" id="4.10.520.10">
    <property type="entry name" value="IHF-like DNA-binding proteins"/>
    <property type="match status" value="1"/>
</dbReference>
<dbReference type="HAMAP" id="MF_00381">
    <property type="entry name" value="IHF_beta"/>
    <property type="match status" value="1"/>
</dbReference>
<dbReference type="InterPro" id="IPR000119">
    <property type="entry name" value="Hist_DNA-bd"/>
</dbReference>
<dbReference type="InterPro" id="IPR020816">
    <property type="entry name" value="Histone-like_DNA-bd_CS"/>
</dbReference>
<dbReference type="InterPro" id="IPR010992">
    <property type="entry name" value="IHF-like_DNA-bd_dom_sf"/>
</dbReference>
<dbReference type="InterPro" id="IPR005685">
    <property type="entry name" value="IHF_beta"/>
</dbReference>
<dbReference type="NCBIfam" id="TIGR00988">
    <property type="entry name" value="hip"/>
    <property type="match status" value="1"/>
</dbReference>
<dbReference type="NCBIfam" id="NF001222">
    <property type="entry name" value="PRK00199.1"/>
    <property type="match status" value="1"/>
</dbReference>
<dbReference type="PANTHER" id="PTHR33175">
    <property type="entry name" value="DNA-BINDING PROTEIN HU"/>
    <property type="match status" value="1"/>
</dbReference>
<dbReference type="PANTHER" id="PTHR33175:SF5">
    <property type="entry name" value="INTEGRATION HOST FACTOR SUBUNIT BETA"/>
    <property type="match status" value="1"/>
</dbReference>
<dbReference type="Pfam" id="PF00216">
    <property type="entry name" value="Bac_DNA_binding"/>
    <property type="match status" value="1"/>
</dbReference>
<dbReference type="PRINTS" id="PR01727">
    <property type="entry name" value="DNABINDINGHU"/>
</dbReference>
<dbReference type="SMART" id="SM00411">
    <property type="entry name" value="BHL"/>
    <property type="match status" value="1"/>
</dbReference>
<dbReference type="SUPFAM" id="SSF47729">
    <property type="entry name" value="IHF-like DNA-binding proteins"/>
    <property type="match status" value="1"/>
</dbReference>
<dbReference type="PROSITE" id="PS00045">
    <property type="entry name" value="HISTONE_LIKE"/>
    <property type="match status" value="1"/>
</dbReference>
<protein>
    <recommendedName>
        <fullName evidence="1">Integration host factor subunit beta</fullName>
        <shortName evidence="1">IHF-beta</shortName>
    </recommendedName>
</protein>
<reference key="1">
    <citation type="submission" date="2008-01" db="EMBL/GenBank/DDBJ databases">
        <title>Complete sequence of chromosome of Caulobacter sp. K31.</title>
        <authorList>
            <consortium name="US DOE Joint Genome Institute"/>
            <person name="Copeland A."/>
            <person name="Lucas S."/>
            <person name="Lapidus A."/>
            <person name="Barry K."/>
            <person name="Glavina del Rio T."/>
            <person name="Dalin E."/>
            <person name="Tice H."/>
            <person name="Pitluck S."/>
            <person name="Bruce D."/>
            <person name="Goodwin L."/>
            <person name="Thompson L.S."/>
            <person name="Brettin T."/>
            <person name="Detter J.C."/>
            <person name="Han C."/>
            <person name="Schmutz J."/>
            <person name="Larimer F."/>
            <person name="Land M."/>
            <person name="Hauser L."/>
            <person name="Kyrpides N."/>
            <person name="Kim E."/>
            <person name="Stephens C."/>
            <person name="Richardson P."/>
        </authorList>
    </citation>
    <scope>NUCLEOTIDE SEQUENCE [LARGE SCALE GENOMIC DNA]</scope>
    <source>
        <strain>K31</strain>
    </source>
</reference>
<proteinExistence type="inferred from homology"/>
<accession>B0T273</accession>
<keyword id="KW-0233">DNA recombination</keyword>
<keyword id="KW-0238">DNA-binding</keyword>
<keyword id="KW-0804">Transcription</keyword>
<keyword id="KW-0805">Transcription regulation</keyword>
<keyword id="KW-0810">Translation regulation</keyword>
<feature type="chain" id="PRO_1000122208" description="Integration host factor subunit beta">
    <location>
        <begin position="1"/>
        <end position="94"/>
    </location>
</feature>